<gene>
    <name evidence="1" type="primary">rplX</name>
    <name evidence="1" type="synonym">rpl24</name>
    <name type="ordered locus">sync_0426</name>
</gene>
<comment type="function">
    <text evidence="1">One of two assembly initiator proteins, it binds directly to the 5'-end of the 23S rRNA, where it nucleates assembly of the 50S subunit.</text>
</comment>
<comment type="function">
    <text evidence="1">One of the proteins that surrounds the polypeptide exit tunnel on the outside of the subunit.</text>
</comment>
<comment type="subunit">
    <text evidence="1">Part of the 50S ribosomal subunit.</text>
</comment>
<comment type="similarity">
    <text evidence="1">Belongs to the universal ribosomal protein uL24 family.</text>
</comment>
<organism>
    <name type="scientific">Synechococcus sp. (strain CC9311)</name>
    <dbReference type="NCBI Taxonomy" id="64471"/>
    <lineage>
        <taxon>Bacteria</taxon>
        <taxon>Bacillati</taxon>
        <taxon>Cyanobacteriota</taxon>
        <taxon>Cyanophyceae</taxon>
        <taxon>Synechococcales</taxon>
        <taxon>Synechococcaceae</taxon>
        <taxon>Synechococcus</taxon>
    </lineage>
</organism>
<keyword id="KW-1185">Reference proteome</keyword>
<keyword id="KW-0687">Ribonucleoprotein</keyword>
<keyword id="KW-0689">Ribosomal protein</keyword>
<keyword id="KW-0694">RNA-binding</keyword>
<keyword id="KW-0699">rRNA-binding</keyword>
<feature type="chain" id="PRO_1000073264" description="Large ribosomal subunit protein uL24">
    <location>
        <begin position="1"/>
        <end position="103"/>
    </location>
</feature>
<name>RL24_SYNS3</name>
<reference key="1">
    <citation type="journal article" date="2006" name="Proc. Natl. Acad. Sci. U.S.A.">
        <title>Genome sequence of Synechococcus CC9311: insights into adaptation to a coastal environment.</title>
        <authorList>
            <person name="Palenik B."/>
            <person name="Ren Q."/>
            <person name="Dupont C.L."/>
            <person name="Myers G.S."/>
            <person name="Heidelberg J.F."/>
            <person name="Badger J.H."/>
            <person name="Madupu R."/>
            <person name="Nelson W.C."/>
            <person name="Brinkac L.M."/>
            <person name="Dodson R.J."/>
            <person name="Durkin A.S."/>
            <person name="Daugherty S.C."/>
            <person name="Sullivan S.A."/>
            <person name="Khouri H."/>
            <person name="Mohamoud Y."/>
            <person name="Halpin R."/>
            <person name="Paulsen I.T."/>
        </authorList>
    </citation>
    <scope>NUCLEOTIDE SEQUENCE [LARGE SCALE GENOMIC DNA]</scope>
    <source>
        <strain>CC9311</strain>
    </source>
</reference>
<proteinExistence type="inferred from homology"/>
<protein>
    <recommendedName>
        <fullName evidence="1">Large ribosomal subunit protein uL24</fullName>
    </recommendedName>
    <alternativeName>
        <fullName evidence="2">50S ribosomal protein L24</fullName>
    </alternativeName>
</protein>
<dbReference type="EMBL" id="CP000435">
    <property type="protein sequence ID" value="ABI47032.1"/>
    <property type="molecule type" value="Genomic_DNA"/>
</dbReference>
<dbReference type="SMR" id="Q0ID16"/>
<dbReference type="STRING" id="64471.sync_0426"/>
<dbReference type="KEGG" id="syg:sync_0426"/>
<dbReference type="eggNOG" id="COG0198">
    <property type="taxonomic scope" value="Bacteria"/>
</dbReference>
<dbReference type="HOGENOM" id="CLU_093315_2_3_3"/>
<dbReference type="Proteomes" id="UP000001961">
    <property type="component" value="Chromosome"/>
</dbReference>
<dbReference type="GO" id="GO:1990904">
    <property type="term" value="C:ribonucleoprotein complex"/>
    <property type="evidence" value="ECO:0007669"/>
    <property type="project" value="UniProtKB-KW"/>
</dbReference>
<dbReference type="GO" id="GO:0005840">
    <property type="term" value="C:ribosome"/>
    <property type="evidence" value="ECO:0007669"/>
    <property type="project" value="UniProtKB-KW"/>
</dbReference>
<dbReference type="GO" id="GO:0019843">
    <property type="term" value="F:rRNA binding"/>
    <property type="evidence" value="ECO:0007669"/>
    <property type="project" value="UniProtKB-UniRule"/>
</dbReference>
<dbReference type="GO" id="GO:0003735">
    <property type="term" value="F:structural constituent of ribosome"/>
    <property type="evidence" value="ECO:0007669"/>
    <property type="project" value="InterPro"/>
</dbReference>
<dbReference type="GO" id="GO:0006412">
    <property type="term" value="P:translation"/>
    <property type="evidence" value="ECO:0007669"/>
    <property type="project" value="UniProtKB-UniRule"/>
</dbReference>
<dbReference type="CDD" id="cd06089">
    <property type="entry name" value="KOW_RPL26"/>
    <property type="match status" value="1"/>
</dbReference>
<dbReference type="Gene3D" id="2.30.30.30">
    <property type="match status" value="1"/>
</dbReference>
<dbReference type="HAMAP" id="MF_01326_B">
    <property type="entry name" value="Ribosomal_uL24_B"/>
    <property type="match status" value="1"/>
</dbReference>
<dbReference type="InterPro" id="IPR005824">
    <property type="entry name" value="KOW"/>
</dbReference>
<dbReference type="InterPro" id="IPR014722">
    <property type="entry name" value="Rib_uL2_dom2"/>
</dbReference>
<dbReference type="InterPro" id="IPR003256">
    <property type="entry name" value="Ribosomal_uL24"/>
</dbReference>
<dbReference type="InterPro" id="IPR005825">
    <property type="entry name" value="Ribosomal_uL24_CS"/>
</dbReference>
<dbReference type="InterPro" id="IPR041988">
    <property type="entry name" value="Ribosomal_uL24_KOW"/>
</dbReference>
<dbReference type="InterPro" id="IPR008991">
    <property type="entry name" value="Translation_prot_SH3-like_sf"/>
</dbReference>
<dbReference type="NCBIfam" id="TIGR01079">
    <property type="entry name" value="rplX_bact"/>
    <property type="match status" value="1"/>
</dbReference>
<dbReference type="PANTHER" id="PTHR12903">
    <property type="entry name" value="MITOCHONDRIAL RIBOSOMAL PROTEIN L24"/>
    <property type="match status" value="1"/>
</dbReference>
<dbReference type="Pfam" id="PF00467">
    <property type="entry name" value="KOW"/>
    <property type="match status" value="1"/>
</dbReference>
<dbReference type="Pfam" id="PF17136">
    <property type="entry name" value="ribosomal_L24"/>
    <property type="match status" value="1"/>
</dbReference>
<dbReference type="SMART" id="SM00739">
    <property type="entry name" value="KOW"/>
    <property type="match status" value="1"/>
</dbReference>
<dbReference type="SUPFAM" id="SSF50104">
    <property type="entry name" value="Translation proteins SH3-like domain"/>
    <property type="match status" value="1"/>
</dbReference>
<dbReference type="PROSITE" id="PS01108">
    <property type="entry name" value="RIBOSOMAL_L24"/>
    <property type="match status" value="1"/>
</dbReference>
<sequence length="103" mass="11532">MRLRKGDTVQVIAGKDKGKTGEVLRTLPNENRVIVEGLNMRTRHVKPTQEGETGRIVTEEASLHASNVMFYSTAKKVASRIELITEKDGSKKRRLKKTGEVID</sequence>
<accession>Q0ID16</accession>
<evidence type="ECO:0000255" key="1">
    <source>
        <dbReference type="HAMAP-Rule" id="MF_01326"/>
    </source>
</evidence>
<evidence type="ECO:0000305" key="2"/>